<proteinExistence type="inferred from homology"/>
<accession>A0LZH8</accession>
<reference key="1">
    <citation type="journal article" date="2006" name="Environ. Microbiol.">
        <title>Whole genome analysis of the marine Bacteroidetes'Gramella forsetii' reveals adaptations to degradation of polymeric organic matter.</title>
        <authorList>
            <person name="Bauer M."/>
            <person name="Kube M."/>
            <person name="Teeling H."/>
            <person name="Richter M."/>
            <person name="Lombardot T."/>
            <person name="Allers E."/>
            <person name="Wuerdemann C.A."/>
            <person name="Quast C."/>
            <person name="Kuhl H."/>
            <person name="Knaust F."/>
            <person name="Woebken D."/>
            <person name="Bischof K."/>
            <person name="Mussmann M."/>
            <person name="Choudhuri J.V."/>
            <person name="Meyer F."/>
            <person name="Reinhardt R."/>
            <person name="Amann R.I."/>
            <person name="Gloeckner F.O."/>
        </authorList>
    </citation>
    <scope>NUCLEOTIDE SEQUENCE [LARGE SCALE GENOMIC DNA]</scope>
    <source>
        <strain>DSM 17595 / CGMCC 1.15422 / KT0803</strain>
    </source>
</reference>
<protein>
    <recommendedName>
        <fullName evidence="1">DNA mismatch repair protein MutL</fullName>
    </recommendedName>
</protein>
<gene>
    <name evidence="1" type="primary">mutL</name>
    <name type="ordered locus">GFO_0797</name>
</gene>
<sequence>MSDIIQLLPDHVANQIAAGEVVQRPASVIKELLENSIDAKASRIQVVIKDAGKTLIQIVDDGIGMSLTDARMSFERHATSKIKLADDLFSLKTKGFRGEALASIAAIAHVELRTKTENDEVGTCLKVEGSEVVSQDAFVTPKGTSISVKNLFYNIPARRNFLKSDNVETRHIIDEFQRVALAHPNISFSLLHNGNELFQLPITNFRQRITNILGGKTNEKLVPVEEDTEIAKISGFVGKPEFAKKSRGEQFFFVNDRFIKSPYLNHAVTASFEGLLKDKSYPSYFLYLEVDPKSIDINIHPTKTEIKFDDEHALYAILKSSIKHSLGQFNVAPILDFERDSELDTPYDYKNKEADAPQVEVDRNFNPFQNEGSSKTQFSGGTNFRKDKPAEWESIYSGMQSETDTDIDIRHIEFESEEVTGNLFGAREEQTEKSTFQVQKKYIVSTLKSGILVIDQHRAHTRVLYEELLKNITVSSAVSQQLLFPLLLQFNSHEVEMLKEIKDSLEQTGFVFSSIKKEEVEISGIPTLISESEVEILLEQLIADFEKDVPDNGFSQTDLLAKSLANSMAVRSGTLLNSAEQQHIVNRLFACKEPALSPFNKTVFTTLSVDELDKKFA</sequence>
<keyword id="KW-0227">DNA damage</keyword>
<keyword id="KW-0234">DNA repair</keyword>
<evidence type="ECO:0000255" key="1">
    <source>
        <dbReference type="HAMAP-Rule" id="MF_00149"/>
    </source>
</evidence>
<organism>
    <name type="scientific">Christiangramia forsetii (strain DSM 17595 / CGMCC 1.15422 / KT0803)</name>
    <name type="common">Gramella forsetii</name>
    <dbReference type="NCBI Taxonomy" id="411154"/>
    <lineage>
        <taxon>Bacteria</taxon>
        <taxon>Pseudomonadati</taxon>
        <taxon>Bacteroidota</taxon>
        <taxon>Flavobacteriia</taxon>
        <taxon>Flavobacteriales</taxon>
        <taxon>Flavobacteriaceae</taxon>
        <taxon>Christiangramia</taxon>
    </lineage>
</organism>
<comment type="function">
    <text evidence="1">This protein is involved in the repair of mismatches in DNA. It is required for dam-dependent methyl-directed DNA mismatch repair. May act as a 'molecular matchmaker', a protein that promotes the formation of a stable complex between two or more DNA-binding proteins in an ATP-dependent manner without itself being part of a final effector complex.</text>
</comment>
<comment type="similarity">
    <text evidence="1">Belongs to the DNA mismatch repair MutL/HexB family.</text>
</comment>
<feature type="chain" id="PRO_1000058144" description="DNA mismatch repair protein MutL">
    <location>
        <begin position="1"/>
        <end position="617"/>
    </location>
</feature>
<name>MUTL_CHRFK</name>
<dbReference type="EMBL" id="CU207366">
    <property type="protein sequence ID" value="CAL65773.1"/>
    <property type="molecule type" value="Genomic_DNA"/>
</dbReference>
<dbReference type="RefSeq" id="WP_011708710.1">
    <property type="nucleotide sequence ID" value="NC_008571.1"/>
</dbReference>
<dbReference type="SMR" id="A0LZH8"/>
<dbReference type="STRING" id="411154.GFO_0797"/>
<dbReference type="KEGG" id="gfo:GFO_0797"/>
<dbReference type="eggNOG" id="COG0323">
    <property type="taxonomic scope" value="Bacteria"/>
</dbReference>
<dbReference type="HOGENOM" id="CLU_004131_4_1_10"/>
<dbReference type="OrthoDB" id="9763467at2"/>
<dbReference type="Proteomes" id="UP000000755">
    <property type="component" value="Chromosome"/>
</dbReference>
<dbReference type="GO" id="GO:0032300">
    <property type="term" value="C:mismatch repair complex"/>
    <property type="evidence" value="ECO:0007669"/>
    <property type="project" value="InterPro"/>
</dbReference>
<dbReference type="GO" id="GO:0005524">
    <property type="term" value="F:ATP binding"/>
    <property type="evidence" value="ECO:0007669"/>
    <property type="project" value="InterPro"/>
</dbReference>
<dbReference type="GO" id="GO:0016887">
    <property type="term" value="F:ATP hydrolysis activity"/>
    <property type="evidence" value="ECO:0007669"/>
    <property type="project" value="InterPro"/>
</dbReference>
<dbReference type="GO" id="GO:0140664">
    <property type="term" value="F:ATP-dependent DNA damage sensor activity"/>
    <property type="evidence" value="ECO:0007669"/>
    <property type="project" value="InterPro"/>
</dbReference>
<dbReference type="GO" id="GO:0030983">
    <property type="term" value="F:mismatched DNA binding"/>
    <property type="evidence" value="ECO:0007669"/>
    <property type="project" value="InterPro"/>
</dbReference>
<dbReference type="GO" id="GO:0006298">
    <property type="term" value="P:mismatch repair"/>
    <property type="evidence" value="ECO:0007669"/>
    <property type="project" value="UniProtKB-UniRule"/>
</dbReference>
<dbReference type="CDD" id="cd16926">
    <property type="entry name" value="HATPase_MutL-MLH-PMS-like"/>
    <property type="match status" value="1"/>
</dbReference>
<dbReference type="CDD" id="cd00782">
    <property type="entry name" value="MutL_Trans"/>
    <property type="match status" value="1"/>
</dbReference>
<dbReference type="FunFam" id="3.30.565.10:FF:000003">
    <property type="entry name" value="DNA mismatch repair endonuclease MutL"/>
    <property type="match status" value="1"/>
</dbReference>
<dbReference type="Gene3D" id="3.30.230.10">
    <property type="match status" value="1"/>
</dbReference>
<dbReference type="Gene3D" id="3.30.565.10">
    <property type="entry name" value="Histidine kinase-like ATPase, C-terminal domain"/>
    <property type="match status" value="1"/>
</dbReference>
<dbReference type="Gene3D" id="3.30.1540.20">
    <property type="entry name" value="MutL, C-terminal domain, dimerisation subdomain"/>
    <property type="match status" value="1"/>
</dbReference>
<dbReference type="Gene3D" id="3.30.1370.100">
    <property type="entry name" value="MutL, C-terminal domain, regulatory subdomain"/>
    <property type="match status" value="1"/>
</dbReference>
<dbReference type="HAMAP" id="MF_00149">
    <property type="entry name" value="DNA_mis_repair"/>
    <property type="match status" value="1"/>
</dbReference>
<dbReference type="InterPro" id="IPR014762">
    <property type="entry name" value="DNA_mismatch_repair_CS"/>
</dbReference>
<dbReference type="InterPro" id="IPR020667">
    <property type="entry name" value="DNA_mismatch_repair_MutL"/>
</dbReference>
<dbReference type="InterPro" id="IPR013507">
    <property type="entry name" value="DNA_mismatch_S5_2-like"/>
</dbReference>
<dbReference type="InterPro" id="IPR036890">
    <property type="entry name" value="HATPase_C_sf"/>
</dbReference>
<dbReference type="InterPro" id="IPR002099">
    <property type="entry name" value="MutL/Mlh/PMS"/>
</dbReference>
<dbReference type="InterPro" id="IPR038973">
    <property type="entry name" value="MutL/Mlh/Pms-like"/>
</dbReference>
<dbReference type="InterPro" id="IPR014790">
    <property type="entry name" value="MutL_C"/>
</dbReference>
<dbReference type="InterPro" id="IPR042120">
    <property type="entry name" value="MutL_C_dimsub"/>
</dbReference>
<dbReference type="InterPro" id="IPR042121">
    <property type="entry name" value="MutL_C_regsub"/>
</dbReference>
<dbReference type="InterPro" id="IPR037198">
    <property type="entry name" value="MutL_C_sf"/>
</dbReference>
<dbReference type="InterPro" id="IPR020568">
    <property type="entry name" value="Ribosomal_Su5_D2-typ_SF"/>
</dbReference>
<dbReference type="InterPro" id="IPR014721">
    <property type="entry name" value="Ribsml_uS5_D2-typ_fold_subgr"/>
</dbReference>
<dbReference type="NCBIfam" id="TIGR00585">
    <property type="entry name" value="mutl"/>
    <property type="match status" value="1"/>
</dbReference>
<dbReference type="PANTHER" id="PTHR10073">
    <property type="entry name" value="DNA MISMATCH REPAIR PROTEIN MLH, PMS, MUTL"/>
    <property type="match status" value="1"/>
</dbReference>
<dbReference type="PANTHER" id="PTHR10073:SF12">
    <property type="entry name" value="DNA MISMATCH REPAIR PROTEIN MLH1"/>
    <property type="match status" value="1"/>
</dbReference>
<dbReference type="Pfam" id="PF01119">
    <property type="entry name" value="DNA_mis_repair"/>
    <property type="match status" value="1"/>
</dbReference>
<dbReference type="Pfam" id="PF13589">
    <property type="entry name" value="HATPase_c_3"/>
    <property type="match status" value="1"/>
</dbReference>
<dbReference type="Pfam" id="PF08676">
    <property type="entry name" value="MutL_C"/>
    <property type="match status" value="1"/>
</dbReference>
<dbReference type="SMART" id="SM01340">
    <property type="entry name" value="DNA_mis_repair"/>
    <property type="match status" value="1"/>
</dbReference>
<dbReference type="SMART" id="SM00853">
    <property type="entry name" value="MutL_C"/>
    <property type="match status" value="1"/>
</dbReference>
<dbReference type="SUPFAM" id="SSF55874">
    <property type="entry name" value="ATPase domain of HSP90 chaperone/DNA topoisomerase II/histidine kinase"/>
    <property type="match status" value="1"/>
</dbReference>
<dbReference type="SUPFAM" id="SSF118116">
    <property type="entry name" value="DNA mismatch repair protein MutL"/>
    <property type="match status" value="1"/>
</dbReference>
<dbReference type="SUPFAM" id="SSF54211">
    <property type="entry name" value="Ribosomal protein S5 domain 2-like"/>
    <property type="match status" value="1"/>
</dbReference>
<dbReference type="PROSITE" id="PS00058">
    <property type="entry name" value="DNA_MISMATCH_REPAIR_1"/>
    <property type="match status" value="1"/>
</dbReference>